<evidence type="ECO:0000250" key="1">
    <source>
        <dbReference type="UniProtKB" id="P13569"/>
    </source>
</evidence>
<evidence type="ECO:0000250" key="2">
    <source>
        <dbReference type="UniProtKB" id="P26361"/>
    </source>
</evidence>
<evidence type="ECO:0000250" key="3">
    <source>
        <dbReference type="UniProtKB" id="P34158"/>
    </source>
</evidence>
<evidence type="ECO:0000255" key="4"/>
<evidence type="ECO:0000255" key="5">
    <source>
        <dbReference type="PROSITE-ProRule" id="PRU00434"/>
    </source>
</evidence>
<evidence type="ECO:0000255" key="6">
    <source>
        <dbReference type="PROSITE-ProRule" id="PRU00441"/>
    </source>
</evidence>
<evidence type="ECO:0000305" key="7"/>
<gene>
    <name evidence="1" type="primary">CFTR</name>
    <name type="synonym">ABCC7</name>
</gene>
<sequence>MQRSPLEKASVVSKLFFSWTRPILRKGYRQRLELSDIYQIPSADSADNLSEKLEREWDRELASKKNPKLINALRRCFFWRFMFYGILLYLGEVTKAVQPLLLGRIIASYDPDNKEERSIAIYLGIGLCLLFIVRTLLLHPAIFGLHHIGMQMRIAMFSLIYKKTLKLSSRVLDKISIGQLVSLLSNNLNKFDEGLALAHFVWIVPLQVALLMGLIWELLQASAFCGLGFLIVLALFQAGLGRMMMKYRDQRAGKINERLVITSEMIENIQSVKAYCWEEAMEKMIENLRQTELKLTRKAAYVRYFNSSAFFFSGFFVVFLSVLPYALIKGIVLRKIFTTISFCIVLRMAVTRQFPWAVQTWYDSLGAINKIQDFLQKQEYKTLEYNLTTTEVVMENVTAFWEEGFGELFEKAKQNNSNRKTSNDDDSLFFSNFSLLGTPVLKDINFKIERGQLLAVAGSTGAGKTSLLMMIMGELEPSEGKIKHSGRISFCSQFSWIMPGTIKENIIFGVSYDEYRYRSVINACQLEEDISKFAEKDNIVLGEGGITLSGGQRARISLARAVYKDADLYLLDSPFGYLDVLTEKEIFESCVCKLMANKTRILVTSKMEHLKKADKILILHEGSSYFYGTFSELQNLRPDFSSKLMGYDSFDQFSAERRNSILTETLRRFSLEGDAPVSWTETKKQSFKQTGEFGEKRKNSILNPINSIRKFSIVQKTPLQMNGIEEDSDEPLERRLSLVPDSEQGEVILPRISVISTGPTLQARRRQSVLNLMTHSVNQGQSIHRKTAASTRKVSLAPQANLTELDIYSRRLSQETGLEISEEINEEDLKECFFDDMESIPAVTTWNTYLRYITVHKSLIFVLIWCLVIFLAEVAASLVVLWFLGNTPPQDKGNSTYSRNNSYAVIITRTSSYYVFYIYVGVADTLLAMGFFRGLPLVHTLITVSKILHHKMLHSVLQAPMSTLNTLKAGGILNRFSKDIAILDDLLPLTIFDFIQLLLIVIGAIAVVAVLQPYIFVATVPVIVAFIMLRAYFLQTSQQLKQLESEGRSPIFTHLVTSLKGLWTLRAFGRQPYFETLFHKALNLHTANWFLYLSTLRWFQMRIEMIFVIFFIAVTFISILTTGEGEGTVGIILTLAMNIMSTLQWAVNSSIDVDSLMRSVSRVFKFIDMPTEEGKPTRSTKPYKNGQLSKVMVIENSHVKKDDIWPSGGQMTVKDLTAKYTEGGNPILENISFSISPGQRVGLLGRTGSGKSTLLSAFLRLLNTEGEIQIDGVSWDSITLQQWRKAFGVIPQKVFIFSGTFRKNLDPYEQWSDQEIWKVADEVGLRSVIEQFPGKLDFVLVDGGCVLSHGHKQLMCLARSVLSKAKILLLDEPSAHLDPVTYQIIRRTLKQAFADCTVILCEHRIEAMLECQQFLVIEENKVRQYDSIQKLLNERSLFRQAISPSDRVKLFPHRNSSKCKTQPQIAALKEETEEEVQDTRL</sequence>
<dbReference type="EC" id="5.6.1.6" evidence="1"/>
<dbReference type="EMBL" id="AF162177">
    <property type="protein sequence ID" value="AAF80467.1"/>
    <property type="molecule type" value="Genomic_DNA"/>
</dbReference>
<dbReference type="EMBL" id="AF162151">
    <property type="protein sequence ID" value="AAF80467.1"/>
    <property type="status" value="JOINED"/>
    <property type="molecule type" value="Genomic_DNA"/>
</dbReference>
<dbReference type="EMBL" id="AF162152">
    <property type="protein sequence ID" value="AAF80467.1"/>
    <property type="status" value="JOINED"/>
    <property type="molecule type" value="Genomic_DNA"/>
</dbReference>
<dbReference type="EMBL" id="AF162153">
    <property type="protein sequence ID" value="AAF80467.1"/>
    <property type="status" value="JOINED"/>
    <property type="molecule type" value="Genomic_DNA"/>
</dbReference>
<dbReference type="EMBL" id="AF162154">
    <property type="protein sequence ID" value="AAF80467.1"/>
    <property type="status" value="JOINED"/>
    <property type="molecule type" value="Genomic_DNA"/>
</dbReference>
<dbReference type="EMBL" id="AF162155">
    <property type="protein sequence ID" value="AAF80467.1"/>
    <property type="status" value="JOINED"/>
    <property type="molecule type" value="Genomic_DNA"/>
</dbReference>
<dbReference type="EMBL" id="AF162156">
    <property type="protein sequence ID" value="AAF80467.1"/>
    <property type="status" value="JOINED"/>
    <property type="molecule type" value="Genomic_DNA"/>
</dbReference>
<dbReference type="EMBL" id="AF162157">
    <property type="protein sequence ID" value="AAF80467.1"/>
    <property type="status" value="JOINED"/>
    <property type="molecule type" value="Genomic_DNA"/>
</dbReference>
<dbReference type="EMBL" id="AF162158">
    <property type="protein sequence ID" value="AAF80467.1"/>
    <property type="status" value="JOINED"/>
    <property type="molecule type" value="Genomic_DNA"/>
</dbReference>
<dbReference type="EMBL" id="AF162159">
    <property type="protein sequence ID" value="AAF80467.1"/>
    <property type="status" value="JOINED"/>
    <property type="molecule type" value="Genomic_DNA"/>
</dbReference>
<dbReference type="EMBL" id="AF162160">
    <property type="protein sequence ID" value="AAF80467.1"/>
    <property type="status" value="JOINED"/>
    <property type="molecule type" value="Genomic_DNA"/>
</dbReference>
<dbReference type="EMBL" id="AF162161">
    <property type="protein sequence ID" value="AAF80467.1"/>
    <property type="status" value="JOINED"/>
    <property type="molecule type" value="Genomic_DNA"/>
</dbReference>
<dbReference type="EMBL" id="AF162162">
    <property type="protein sequence ID" value="AAF80467.1"/>
    <property type="status" value="JOINED"/>
    <property type="molecule type" value="Genomic_DNA"/>
</dbReference>
<dbReference type="EMBL" id="AF162163">
    <property type="protein sequence ID" value="AAF80467.1"/>
    <property type="status" value="JOINED"/>
    <property type="molecule type" value="Genomic_DNA"/>
</dbReference>
<dbReference type="EMBL" id="AF162164">
    <property type="protein sequence ID" value="AAF80467.1"/>
    <property type="status" value="JOINED"/>
    <property type="molecule type" value="Genomic_DNA"/>
</dbReference>
<dbReference type="EMBL" id="AF162165">
    <property type="protein sequence ID" value="AAF80467.1"/>
    <property type="status" value="JOINED"/>
    <property type="molecule type" value="Genomic_DNA"/>
</dbReference>
<dbReference type="EMBL" id="AF162166">
    <property type="protein sequence ID" value="AAF80467.1"/>
    <property type="status" value="JOINED"/>
    <property type="molecule type" value="Genomic_DNA"/>
</dbReference>
<dbReference type="EMBL" id="AF162167">
    <property type="protein sequence ID" value="AAF80467.1"/>
    <property type="status" value="JOINED"/>
    <property type="molecule type" value="Genomic_DNA"/>
</dbReference>
<dbReference type="EMBL" id="AF162168">
    <property type="protein sequence ID" value="AAF80467.1"/>
    <property type="status" value="JOINED"/>
    <property type="molecule type" value="Genomic_DNA"/>
</dbReference>
<dbReference type="EMBL" id="AF162169">
    <property type="protein sequence ID" value="AAF80467.1"/>
    <property type="status" value="JOINED"/>
    <property type="molecule type" value="Genomic_DNA"/>
</dbReference>
<dbReference type="EMBL" id="AF162170">
    <property type="protein sequence ID" value="AAF80467.1"/>
    <property type="status" value="JOINED"/>
    <property type="molecule type" value="Genomic_DNA"/>
</dbReference>
<dbReference type="EMBL" id="AF162171">
    <property type="protein sequence ID" value="AAF80467.1"/>
    <property type="status" value="JOINED"/>
    <property type="molecule type" value="Genomic_DNA"/>
</dbReference>
<dbReference type="EMBL" id="AF162172">
    <property type="protein sequence ID" value="AAF80467.1"/>
    <property type="status" value="JOINED"/>
    <property type="molecule type" value="Genomic_DNA"/>
</dbReference>
<dbReference type="EMBL" id="AF162173">
    <property type="protein sequence ID" value="AAF80467.1"/>
    <property type="status" value="JOINED"/>
    <property type="molecule type" value="Genomic_DNA"/>
</dbReference>
<dbReference type="EMBL" id="AF162174">
    <property type="protein sequence ID" value="AAF80467.1"/>
    <property type="status" value="JOINED"/>
    <property type="molecule type" value="Genomic_DNA"/>
</dbReference>
<dbReference type="EMBL" id="AF162175">
    <property type="protein sequence ID" value="AAF80467.1"/>
    <property type="status" value="JOINED"/>
    <property type="molecule type" value="Genomic_DNA"/>
</dbReference>
<dbReference type="EMBL" id="AF162176">
    <property type="protein sequence ID" value="AAF80467.1"/>
    <property type="status" value="JOINED"/>
    <property type="molecule type" value="Genomic_DNA"/>
</dbReference>
<dbReference type="SMR" id="Q7JII8"/>
<dbReference type="STRING" id="9541.ENSMFAP00000007238"/>
<dbReference type="GlyCosmos" id="Q7JII8">
    <property type="glycosylation" value="2 sites, No reported glycans"/>
</dbReference>
<dbReference type="eggNOG" id="KOG0054">
    <property type="taxonomic scope" value="Eukaryota"/>
</dbReference>
<dbReference type="Proteomes" id="UP000233100">
    <property type="component" value="Unplaced"/>
</dbReference>
<dbReference type="GO" id="GO:0016324">
    <property type="term" value="C:apical plasma membrane"/>
    <property type="evidence" value="ECO:0000250"/>
    <property type="project" value="UniProtKB"/>
</dbReference>
<dbReference type="GO" id="GO:0034707">
    <property type="term" value="C:chloride channel complex"/>
    <property type="evidence" value="ECO:0007669"/>
    <property type="project" value="UniProtKB-KW"/>
</dbReference>
<dbReference type="GO" id="GO:0005829">
    <property type="term" value="C:cytosol"/>
    <property type="evidence" value="ECO:0007669"/>
    <property type="project" value="TreeGrafter"/>
</dbReference>
<dbReference type="GO" id="GO:0005769">
    <property type="term" value="C:early endosome"/>
    <property type="evidence" value="ECO:0000250"/>
    <property type="project" value="UniProtKB"/>
</dbReference>
<dbReference type="GO" id="GO:0031901">
    <property type="term" value="C:early endosome membrane"/>
    <property type="evidence" value="ECO:0007669"/>
    <property type="project" value="UniProtKB-SubCell"/>
</dbReference>
<dbReference type="GO" id="GO:0005789">
    <property type="term" value="C:endoplasmic reticulum membrane"/>
    <property type="evidence" value="ECO:0000250"/>
    <property type="project" value="UniProtKB"/>
</dbReference>
<dbReference type="GO" id="GO:0016020">
    <property type="term" value="C:membrane"/>
    <property type="evidence" value="ECO:0000250"/>
    <property type="project" value="UniProtKB"/>
</dbReference>
<dbReference type="GO" id="GO:0005634">
    <property type="term" value="C:nucleus"/>
    <property type="evidence" value="ECO:0000250"/>
    <property type="project" value="UniProtKB"/>
</dbReference>
<dbReference type="GO" id="GO:0005886">
    <property type="term" value="C:plasma membrane"/>
    <property type="evidence" value="ECO:0000250"/>
    <property type="project" value="UniProtKB"/>
</dbReference>
<dbReference type="GO" id="GO:0055038">
    <property type="term" value="C:recycling endosome membrane"/>
    <property type="evidence" value="ECO:0007669"/>
    <property type="project" value="UniProtKB-SubCell"/>
</dbReference>
<dbReference type="GO" id="GO:0140359">
    <property type="term" value="F:ABC-type transporter activity"/>
    <property type="evidence" value="ECO:0007669"/>
    <property type="project" value="InterPro"/>
</dbReference>
<dbReference type="GO" id="GO:0005524">
    <property type="term" value="F:ATP binding"/>
    <property type="evidence" value="ECO:0007669"/>
    <property type="project" value="UniProtKB-KW"/>
</dbReference>
<dbReference type="GO" id="GO:0016887">
    <property type="term" value="F:ATP hydrolysis activity"/>
    <property type="evidence" value="ECO:0000250"/>
    <property type="project" value="UniProtKB"/>
</dbReference>
<dbReference type="GO" id="GO:0015106">
    <property type="term" value="F:bicarbonate transmembrane transporter activity"/>
    <property type="evidence" value="ECO:0000250"/>
    <property type="project" value="UniProtKB"/>
</dbReference>
<dbReference type="GO" id="GO:0005254">
    <property type="term" value="F:chloride channel activity"/>
    <property type="evidence" value="ECO:0000250"/>
    <property type="project" value="UniProtKB"/>
</dbReference>
<dbReference type="GO" id="GO:0019869">
    <property type="term" value="F:chloride channel inhibitor activity"/>
    <property type="evidence" value="ECO:0000250"/>
    <property type="project" value="UniProtKB"/>
</dbReference>
<dbReference type="GO" id="GO:0015108">
    <property type="term" value="F:chloride transmembrane transporter activity"/>
    <property type="evidence" value="ECO:0000250"/>
    <property type="project" value="UniProtKB"/>
</dbReference>
<dbReference type="GO" id="GO:0005260">
    <property type="term" value="F:intracellularly ATP-gated chloride channel activity"/>
    <property type="evidence" value="ECO:0000250"/>
    <property type="project" value="UniProtKB"/>
</dbReference>
<dbReference type="GO" id="GO:0015701">
    <property type="term" value="P:bicarbonate transport"/>
    <property type="evidence" value="ECO:0000250"/>
    <property type="project" value="UniProtKB"/>
</dbReference>
<dbReference type="GO" id="GO:0071320">
    <property type="term" value="P:cellular response to cAMP"/>
    <property type="evidence" value="ECO:0000250"/>
    <property type="project" value="UniProtKB"/>
</dbReference>
<dbReference type="GO" id="GO:1904322">
    <property type="term" value="P:cellular response to forskolin"/>
    <property type="evidence" value="ECO:0000250"/>
    <property type="project" value="UniProtKB"/>
</dbReference>
<dbReference type="GO" id="GO:1902476">
    <property type="term" value="P:chloride transmembrane transport"/>
    <property type="evidence" value="ECO:0000250"/>
    <property type="project" value="UniProtKB"/>
</dbReference>
<dbReference type="GO" id="GO:0051454">
    <property type="term" value="P:intracellular pH elevation"/>
    <property type="evidence" value="ECO:0000250"/>
    <property type="project" value="UniProtKB"/>
</dbReference>
<dbReference type="GO" id="GO:0060081">
    <property type="term" value="P:membrane hyperpolarization"/>
    <property type="evidence" value="ECO:0000250"/>
    <property type="project" value="UniProtKB"/>
</dbReference>
<dbReference type="GO" id="GO:0050891">
    <property type="term" value="P:multicellular organismal-level water homeostasis"/>
    <property type="evidence" value="ECO:0000250"/>
    <property type="project" value="UniProtKB"/>
</dbReference>
<dbReference type="GO" id="GO:0034976">
    <property type="term" value="P:response to endoplasmic reticulum stress"/>
    <property type="evidence" value="ECO:0000250"/>
    <property type="project" value="UniProtKB"/>
</dbReference>
<dbReference type="GO" id="GO:0048240">
    <property type="term" value="P:sperm capacitation"/>
    <property type="evidence" value="ECO:0000250"/>
    <property type="project" value="UniProtKB"/>
</dbReference>
<dbReference type="GO" id="GO:0035377">
    <property type="term" value="P:transepithelial water transport"/>
    <property type="evidence" value="ECO:0000250"/>
    <property type="project" value="UniProtKB"/>
</dbReference>
<dbReference type="CDD" id="cd18594">
    <property type="entry name" value="ABC_6TM_CFTR_D1"/>
    <property type="match status" value="1"/>
</dbReference>
<dbReference type="CDD" id="cd18600">
    <property type="entry name" value="ABC_6TM_CFTR_D2"/>
    <property type="match status" value="1"/>
</dbReference>
<dbReference type="CDD" id="cd03291">
    <property type="entry name" value="ABCC_CFTR1"/>
    <property type="match status" value="1"/>
</dbReference>
<dbReference type="CDD" id="cd03289">
    <property type="entry name" value="ABCC_CFTR2"/>
    <property type="match status" value="1"/>
</dbReference>
<dbReference type="FunFam" id="1.20.1560.10:FF:000017">
    <property type="entry name" value="Cystic fibrosis transmembrane conductance regulator"/>
    <property type="match status" value="1"/>
</dbReference>
<dbReference type="FunFam" id="1.20.1560.10:FF:000019">
    <property type="entry name" value="Cystic fibrosis transmembrane conductance regulator"/>
    <property type="match status" value="1"/>
</dbReference>
<dbReference type="FunFam" id="3.40.50.300:FF:000581">
    <property type="entry name" value="Cystic fibrosis transmembrane conductance regulator"/>
    <property type="match status" value="1"/>
</dbReference>
<dbReference type="FunFam" id="3.40.50.300:FF:000591">
    <property type="entry name" value="Cystic fibrosis transmembrane conductance regulator"/>
    <property type="match status" value="1"/>
</dbReference>
<dbReference type="Gene3D" id="1.20.1560.10">
    <property type="entry name" value="ABC transporter type 1, transmembrane domain"/>
    <property type="match status" value="2"/>
</dbReference>
<dbReference type="Gene3D" id="3.40.50.300">
    <property type="entry name" value="P-loop containing nucleotide triphosphate hydrolases"/>
    <property type="match status" value="2"/>
</dbReference>
<dbReference type="InterPro" id="IPR003593">
    <property type="entry name" value="AAA+_ATPase"/>
</dbReference>
<dbReference type="InterPro" id="IPR011527">
    <property type="entry name" value="ABC1_TM_dom"/>
</dbReference>
<dbReference type="InterPro" id="IPR036640">
    <property type="entry name" value="ABC1_TM_sf"/>
</dbReference>
<dbReference type="InterPro" id="IPR003439">
    <property type="entry name" value="ABC_transporter-like_ATP-bd"/>
</dbReference>
<dbReference type="InterPro" id="IPR017871">
    <property type="entry name" value="ABC_transporter-like_CS"/>
</dbReference>
<dbReference type="InterPro" id="IPR050173">
    <property type="entry name" value="ABC_transporter_C-like"/>
</dbReference>
<dbReference type="InterPro" id="IPR009147">
    <property type="entry name" value="CFTR/ABCC7"/>
</dbReference>
<dbReference type="InterPro" id="IPR047082">
    <property type="entry name" value="CFTR1_ATP-bd_dom1"/>
</dbReference>
<dbReference type="InterPro" id="IPR025837">
    <property type="entry name" value="CFTR_reg_dom"/>
</dbReference>
<dbReference type="InterPro" id="IPR027417">
    <property type="entry name" value="P-loop_NTPase"/>
</dbReference>
<dbReference type="NCBIfam" id="TIGR01271">
    <property type="entry name" value="CFTR_protein"/>
    <property type="match status" value="1"/>
</dbReference>
<dbReference type="PANTHER" id="PTHR24223">
    <property type="entry name" value="ATP-BINDING CASSETTE SUB-FAMILY C"/>
    <property type="match status" value="1"/>
</dbReference>
<dbReference type="PANTHER" id="PTHR24223:SF19">
    <property type="entry name" value="CYSTIC FIBROSIS TRANSMEMBRANE CONDUCTANCE REGULATOR"/>
    <property type="match status" value="1"/>
</dbReference>
<dbReference type="Pfam" id="PF00664">
    <property type="entry name" value="ABC_membrane"/>
    <property type="match status" value="2"/>
</dbReference>
<dbReference type="Pfam" id="PF00005">
    <property type="entry name" value="ABC_tran"/>
    <property type="match status" value="2"/>
</dbReference>
<dbReference type="Pfam" id="PF14396">
    <property type="entry name" value="CFTR_R"/>
    <property type="match status" value="1"/>
</dbReference>
<dbReference type="PRINTS" id="PR01851">
    <property type="entry name" value="CYSFIBREGLTR"/>
</dbReference>
<dbReference type="SMART" id="SM00382">
    <property type="entry name" value="AAA"/>
    <property type="match status" value="2"/>
</dbReference>
<dbReference type="SUPFAM" id="SSF90123">
    <property type="entry name" value="ABC transporter transmembrane region"/>
    <property type="match status" value="2"/>
</dbReference>
<dbReference type="SUPFAM" id="SSF52540">
    <property type="entry name" value="P-loop containing nucleoside triphosphate hydrolases"/>
    <property type="match status" value="2"/>
</dbReference>
<dbReference type="PROSITE" id="PS50929">
    <property type="entry name" value="ABC_TM1F"/>
    <property type="match status" value="2"/>
</dbReference>
<dbReference type="PROSITE" id="PS00211">
    <property type="entry name" value="ABC_TRANSPORTER_1"/>
    <property type="match status" value="1"/>
</dbReference>
<dbReference type="PROSITE" id="PS50893">
    <property type="entry name" value="ABC_TRANSPORTER_2"/>
    <property type="match status" value="2"/>
</dbReference>
<keyword id="KW-0067">ATP-binding</keyword>
<keyword id="KW-1003">Cell membrane</keyword>
<keyword id="KW-0868">Chloride</keyword>
<keyword id="KW-0869">Chloride channel</keyword>
<keyword id="KW-0256">Endoplasmic reticulum</keyword>
<keyword id="KW-0967">Endosome</keyword>
<keyword id="KW-0325">Glycoprotein</keyword>
<keyword id="KW-0407">Ion channel</keyword>
<keyword id="KW-0406">Ion transport</keyword>
<keyword id="KW-0413">Isomerase</keyword>
<keyword id="KW-1017">Isopeptide bond</keyword>
<keyword id="KW-0449">Lipoprotein</keyword>
<keyword id="KW-0472">Membrane</keyword>
<keyword id="KW-0547">Nucleotide-binding</keyword>
<keyword id="KW-0539">Nucleus</keyword>
<keyword id="KW-0564">Palmitate</keyword>
<keyword id="KW-0597">Phosphoprotein</keyword>
<keyword id="KW-1185">Reference proteome</keyword>
<keyword id="KW-0677">Repeat</keyword>
<keyword id="KW-0812">Transmembrane</keyword>
<keyword id="KW-1133">Transmembrane helix</keyword>
<keyword id="KW-0813">Transport</keyword>
<keyword id="KW-0832">Ubl conjugation</keyword>
<proteinExistence type="inferred from homology"/>
<comment type="function">
    <text evidence="1 2">Epithelial ion channel that plays an important role in the regulation of epithelial ion and water transport and fluid homeostasis. Mediates the transport of chloride ions across the cell membrane (By similarity). Possesses an intrinsic ATPase activity and utilizes ATP to gate its channel; the passive flow of anions through the channel is gated by cycles of ATP binding and hydrolysis by the ATP-binding domains (By similarity). The ion channel is also permeable to HCO(3)(-); selectivity depends on the extracellular chloride concentration. Exerts its function also by modulating the activity of other ion channels and transporters. Contributes to the regulation of the pH and the ion content of the epithelial fluid layer. Modulates the activity of the epithelial sodium channel (ENaC) complex, in part by regulating the cell surface expression of the ENaC complex. May regulate bicarbonate secretion and salvage in epithelial cells by regulating the transporter SLC4A7. Can inhibit the chloride channel activity of ANO1 (By similarity). Plays a role in the chloride and bicarbonate homeostasis during sperm epididymal maturation and capacitation (By similarity).</text>
</comment>
<comment type="catalytic activity">
    <reaction evidence="1">
        <text>ATP + H2O + closed Cl(-) channel = ADP + phosphate + open Cl(-) channel.</text>
        <dbReference type="EC" id="5.6.1.6"/>
    </reaction>
</comment>
<comment type="catalytic activity">
    <reaction evidence="1">
        <text>chloride(in) = chloride(out)</text>
        <dbReference type="Rhea" id="RHEA:29823"/>
        <dbReference type="ChEBI" id="CHEBI:17996"/>
    </reaction>
</comment>
<comment type="catalytic activity">
    <reaction evidence="1">
        <text>hydrogencarbonate(in) = hydrogencarbonate(out)</text>
        <dbReference type="Rhea" id="RHEA:28695"/>
        <dbReference type="ChEBI" id="CHEBI:17544"/>
    </reaction>
</comment>
<comment type="catalytic activity">
    <reaction evidence="1">
        <text>ATP + H2O = ADP + phosphate + H(+)</text>
        <dbReference type="Rhea" id="RHEA:13065"/>
        <dbReference type="ChEBI" id="CHEBI:15377"/>
        <dbReference type="ChEBI" id="CHEBI:15378"/>
        <dbReference type="ChEBI" id="CHEBI:30616"/>
        <dbReference type="ChEBI" id="CHEBI:43474"/>
        <dbReference type="ChEBI" id="CHEBI:456216"/>
    </reaction>
    <physiologicalReaction direction="left-to-right" evidence="1">
        <dbReference type="Rhea" id="RHEA:13066"/>
    </physiologicalReaction>
</comment>
<comment type="subunit">
    <text evidence="1 2 3">Monomer; does not require oligomerization for channel activity. May form oligomers in the membrane (By similarity). Interacts with SLC26A3, SLC26A6 and NHERF1 (By similarity). Interacts with SHANK2 (By similarity). Interacts with MYO6 (By similarity). Interacts (via C-terminus) with GOPC (via PDZ domain); this promotes CFTR internalization and thereby decreases channel activity. Interacts with SLC4A7 through NHERF1. Found in a complex with MYO5B and RAB11A. Interacts with ANO1. Interacts with SLC26A8 (By similarity). Interacts with AHCYL1; the interaction increases CFTR activity (By similarity). Interacts with CSE1L (By similarity). The core-glycosylated form interacts with GORASP2 (via PDZ GRASP-type 1 domain) in respone to ER stress (By similarity). Interacts with MARCHF2; the interaction leads to CFTR ubiqtuitination and degradation (By similarity). Interacts with ADGRG2 (By similarity).</text>
</comment>
<comment type="subcellular location">
    <subcellularLocation>
        <location evidence="2">Apical cell membrane</location>
        <topology evidence="1">Multi-pass membrane protein</topology>
    </subcellularLocation>
    <subcellularLocation>
        <location evidence="1">Early endosome membrane</location>
        <topology evidence="1">Multi-pass membrane protein</topology>
    </subcellularLocation>
    <subcellularLocation>
        <location evidence="2">Cell membrane</location>
        <topology evidence="1">Multi-pass membrane protein</topology>
    </subcellularLocation>
    <subcellularLocation>
        <location evidence="1">Recycling endosome membrane</location>
        <topology evidence="1">Multi-pass membrane protein</topology>
    </subcellularLocation>
    <subcellularLocation>
        <location evidence="1">Endoplasmic reticulum membrane</location>
        <topology evidence="1">Multi-pass membrane protein</topology>
    </subcellularLocation>
    <subcellularLocation>
        <location evidence="3">Nucleus</location>
    </subcellularLocation>
    <text evidence="1 3">The channel is internalized from the cell surface into an endosomal recycling compartment, from where it is recycled to the cell membrane. In the oviduct and bronchus, detected on the apical side of epithelial cells, but not associated with cilia. In Sertoli cells, a processed product is detected in the nucleus. ER stress induces GORASP2-mediated unconventional (ER/Golgi-independent) trafficking of core-glycosylated CFTR to cell membrane.</text>
</comment>
<comment type="domain">
    <text evidence="1 2">Binds and hydrolyzes ATP via the two cytoplasmic ABC transporter nucleotide-binding domains. The two ATP-binding domains interact with each other, forming a head-to-tail dimer. Normal ATPase activity requires interaction between the two domains. The first ABC transporter nucleotide-binding domain has no ATPase activity by itself.</text>
</comment>
<comment type="domain">
    <text evidence="1">The PDZ-binding motif mediates interactions with GOPC and with the SLC4A7, NHERF1/EBP50 complex.</text>
</comment>
<comment type="domain">
    <text evidence="1">The disordered R region mediates channel activation when it is phosphorylated, but not in the absence of phosphorylation.</text>
</comment>
<comment type="PTM">
    <text evidence="1">N-glycosylated.</text>
</comment>
<comment type="PTM">
    <text evidence="1">Phosphorylated; cAMP treatment promotes phosphorylation and activates the channel. Dephosphorylation decreases the ATPase activity (in vitro). Phosphorylation at PKA sites activates the channel. Phosphorylation at PKC sites enhances the response to phosphorylation by PKA. Phosphorylated by AMPK; this inhibits channel activity.</text>
</comment>
<comment type="PTM">
    <text evidence="1">Ubiquitinated, leading to its degradation in the lysosome. Deubiquitination by USP10 in early endosomes enhances its endocytic recycling to the cell membrane. Ubiquitinated by RNF185 during ER stress. Ubiquitinated by MARCHF2 (By similarity).</text>
</comment>
<comment type="similarity">
    <text evidence="7">Belongs to the ABC transporter superfamily. ABCC family. CFTR transporter (TC 3.A.1.202) subfamily.</text>
</comment>
<organism>
    <name type="scientific">Macaca fascicularis</name>
    <name type="common">Crab-eating macaque</name>
    <name type="synonym">Cynomolgus monkey</name>
    <dbReference type="NCBI Taxonomy" id="9541"/>
    <lineage>
        <taxon>Eukaryota</taxon>
        <taxon>Metazoa</taxon>
        <taxon>Chordata</taxon>
        <taxon>Craniata</taxon>
        <taxon>Vertebrata</taxon>
        <taxon>Euteleostomi</taxon>
        <taxon>Mammalia</taxon>
        <taxon>Eutheria</taxon>
        <taxon>Euarchontoglires</taxon>
        <taxon>Primates</taxon>
        <taxon>Haplorrhini</taxon>
        <taxon>Catarrhini</taxon>
        <taxon>Cercopithecidae</taxon>
        <taxon>Cercopithecinae</taxon>
        <taxon>Macaca</taxon>
    </lineage>
</organism>
<accession>Q7JII8</accession>
<reference key="1">
    <citation type="submission" date="1999-06" db="EMBL/GenBank/DDBJ databases">
        <title>Genomic sequence of CFTR in five primate species.</title>
        <authorList>
            <person name="Wine J.J."/>
            <person name="Kuo E."/>
            <person name="Hurlock G."/>
            <person name="Glavac D."/>
            <person name="Dean M."/>
        </authorList>
    </citation>
    <scope>NUCLEOTIDE SEQUENCE [GENOMIC DNA]</scope>
</reference>
<feature type="chain" id="PRO_0000093420" description="Cystic fibrosis transmembrane conductance regulator">
    <location>
        <begin position="1"/>
        <end position="1481"/>
    </location>
</feature>
<feature type="topological domain" description="Cytoplasmic" evidence="1">
    <location>
        <begin position="1"/>
        <end position="77"/>
    </location>
</feature>
<feature type="transmembrane region" description="Helical; Name=1" evidence="1">
    <location>
        <begin position="78"/>
        <end position="98"/>
    </location>
</feature>
<feature type="topological domain" description="Extracellular" evidence="1">
    <location>
        <begin position="99"/>
        <end position="122"/>
    </location>
</feature>
<feature type="transmembrane region" description="Helical; Name=2" evidence="1">
    <location>
        <begin position="123"/>
        <end position="146"/>
    </location>
</feature>
<feature type="topological domain" description="Cytoplasmic" evidence="1">
    <location>
        <begin position="147"/>
        <end position="195"/>
    </location>
</feature>
<feature type="transmembrane region" description="Helical; Name=3" evidence="1">
    <location>
        <begin position="196"/>
        <end position="216"/>
    </location>
</feature>
<feature type="topological domain" description="Extracellular" evidence="1">
    <location>
        <begin position="217"/>
        <end position="222"/>
    </location>
</feature>
<feature type="transmembrane region" description="Helical; Name=4" evidence="1">
    <location>
        <begin position="223"/>
        <end position="243"/>
    </location>
</feature>
<feature type="topological domain" description="Cytoplasmic" evidence="1">
    <location>
        <begin position="244"/>
        <end position="298"/>
    </location>
</feature>
<feature type="transmembrane region" description="Helical; Name=5" evidence="1">
    <location>
        <begin position="299"/>
        <end position="319"/>
    </location>
</feature>
<feature type="topological domain" description="Extracellular" evidence="1">
    <location>
        <begin position="320"/>
        <end position="339"/>
    </location>
</feature>
<feature type="transmembrane region" description="Helical; Name=6" evidence="1">
    <location>
        <begin position="340"/>
        <end position="358"/>
    </location>
</feature>
<feature type="topological domain" description="Cytoplasmic" evidence="1">
    <location>
        <begin position="359"/>
        <end position="858"/>
    </location>
</feature>
<feature type="transmembrane region" description="Helical; Name=7" evidence="1">
    <location>
        <begin position="859"/>
        <end position="879"/>
    </location>
</feature>
<feature type="topological domain" description="Extracellular" evidence="1">
    <location>
        <begin position="880"/>
        <end position="918"/>
    </location>
</feature>
<feature type="transmembrane region" description="Discontinuously helical; Name=8" evidence="1">
    <location>
        <begin position="919"/>
        <end position="939"/>
    </location>
</feature>
<feature type="topological domain" description="Cytoplasmic" evidence="1">
    <location>
        <begin position="940"/>
        <end position="990"/>
    </location>
</feature>
<feature type="transmembrane region" description="Helical; Name=9" evidence="1">
    <location>
        <begin position="991"/>
        <end position="1011"/>
    </location>
</feature>
<feature type="topological domain" description="Extracellular" evidence="1">
    <location>
        <begin position="1012"/>
        <end position="1013"/>
    </location>
</feature>
<feature type="transmembrane region" description="Helical; Name=10" evidence="1">
    <location>
        <begin position="1014"/>
        <end position="1034"/>
    </location>
</feature>
<feature type="topological domain" description="Cytoplasmic" evidence="1">
    <location>
        <begin position="1035"/>
        <end position="1095"/>
    </location>
</feature>
<feature type="transmembrane region" description="Helical; Name=11" evidence="1">
    <location>
        <begin position="1096"/>
        <end position="1116"/>
    </location>
</feature>
<feature type="topological domain" description="Extracellular" evidence="1">
    <location>
        <begin position="1117"/>
        <end position="1130"/>
    </location>
</feature>
<feature type="transmembrane region" description="Helical; Name=12" evidence="1">
    <location>
        <begin position="1131"/>
        <end position="1151"/>
    </location>
</feature>
<feature type="topological domain" description="Cytoplasmic" evidence="1">
    <location>
        <begin position="1152"/>
        <end position="1481"/>
    </location>
</feature>
<feature type="domain" description="ABC transmembrane type-1 1" evidence="6">
    <location>
        <begin position="81"/>
        <end position="365"/>
    </location>
</feature>
<feature type="domain" description="ABC transporter 1" evidence="5">
    <location>
        <begin position="423"/>
        <end position="646"/>
    </location>
</feature>
<feature type="domain" description="ABC transmembrane type-1 2" evidence="6">
    <location>
        <begin position="859"/>
        <end position="1155"/>
    </location>
</feature>
<feature type="domain" description="ABC transporter 2" evidence="5">
    <location>
        <begin position="1211"/>
        <end position="1444"/>
    </location>
</feature>
<feature type="region of interest" description="Disordered R region" evidence="1">
    <location>
        <begin position="654"/>
        <end position="831"/>
    </location>
</feature>
<feature type="region of interest" description="Interaction with GORASP2" evidence="1">
    <location>
        <begin position="1387"/>
        <end position="1481"/>
    </location>
</feature>
<feature type="short sequence motif" description="PDZ-binding" evidence="1">
    <location>
        <begin position="1479"/>
        <end position="1481"/>
    </location>
</feature>
<feature type="binding site" evidence="1">
    <location>
        <position position="401"/>
    </location>
    <ligand>
        <name>ATP</name>
        <dbReference type="ChEBI" id="CHEBI:30616"/>
        <label>1</label>
    </ligand>
</feature>
<feature type="binding site" evidence="1">
    <location>
        <position position="434"/>
    </location>
    <ligand>
        <name>ATP</name>
        <dbReference type="ChEBI" id="CHEBI:30616"/>
        <label>1</label>
    </ligand>
</feature>
<feature type="binding site" evidence="2 5">
    <location>
        <begin position="458"/>
        <end position="465"/>
    </location>
    <ligand>
        <name>ATP</name>
        <dbReference type="ChEBI" id="CHEBI:30616"/>
        <label>1</label>
    </ligand>
</feature>
<feature type="binding site" evidence="5">
    <location>
        <begin position="458"/>
        <end position="465"/>
    </location>
    <ligand>
        <name>ATP</name>
        <dbReference type="ChEBI" id="CHEBI:30616"/>
    </ligand>
</feature>
<feature type="binding site" evidence="2">
    <location>
        <position position="493"/>
    </location>
    <ligand>
        <name>ATP</name>
        <dbReference type="ChEBI" id="CHEBI:30616"/>
        <label>1</label>
    </ligand>
</feature>
<feature type="binding site" evidence="1">
    <location>
        <position position="1220"/>
    </location>
    <ligand>
        <name>ATP</name>
        <dbReference type="ChEBI" id="CHEBI:30616"/>
        <label>2</label>
    </ligand>
</feature>
<feature type="binding site" evidence="5">
    <location>
        <begin position="1245"/>
        <end position="1252"/>
    </location>
    <ligand>
        <name>ATP</name>
        <dbReference type="ChEBI" id="CHEBI:30616"/>
        <label>2</label>
    </ligand>
</feature>
<feature type="binding site" evidence="5">
    <location>
        <begin position="1245"/>
        <end position="1252"/>
    </location>
    <ligand>
        <name>ATP</name>
        <dbReference type="ChEBI" id="CHEBI:30616"/>
    </ligand>
</feature>
<feature type="modified residue" description="Phosphoserine" evidence="1">
    <location>
        <position position="549"/>
    </location>
</feature>
<feature type="modified residue" description="Phosphoserine" evidence="1">
    <location>
        <position position="660"/>
    </location>
</feature>
<feature type="modified residue" description="Phosphoserine; by PKA" evidence="1">
    <location>
        <position position="670"/>
    </location>
</feature>
<feature type="modified residue" description="Phosphoserine" evidence="1">
    <location>
        <position position="686"/>
    </location>
</feature>
<feature type="modified residue" description="Phosphoserine" evidence="1">
    <location>
        <position position="700"/>
    </location>
</feature>
<feature type="modified residue" description="Phosphoserine" evidence="1">
    <location>
        <position position="712"/>
    </location>
</feature>
<feature type="modified residue" description="Phosphothreonine" evidence="1">
    <location>
        <position position="717"/>
    </location>
</feature>
<feature type="modified residue" description="Phosphoserine" evidence="1">
    <location>
        <position position="737"/>
    </location>
</feature>
<feature type="modified residue" description="Phosphoserine" evidence="1">
    <location>
        <position position="753"/>
    </location>
</feature>
<feature type="modified residue" description="Phosphoserine" evidence="1">
    <location>
        <position position="768"/>
    </location>
</feature>
<feature type="modified residue" description="Phosphoserine" evidence="1">
    <location>
        <position position="790"/>
    </location>
</feature>
<feature type="modified residue" description="Phosphoserine" evidence="1">
    <location>
        <position position="795"/>
    </location>
</feature>
<feature type="modified residue" description="Phosphoserine" evidence="1">
    <location>
        <position position="813"/>
    </location>
</feature>
<feature type="modified residue" description="Phosphoserine" evidence="1">
    <location>
        <position position="1445"/>
    </location>
</feature>
<feature type="modified residue" description="Phosphoserine" evidence="1">
    <location>
        <position position="1457"/>
    </location>
</feature>
<feature type="lipid moiety-binding region" description="S-palmitoyl cysteine" evidence="1">
    <location>
        <position position="524"/>
    </location>
</feature>
<feature type="lipid moiety-binding region" description="S-palmitoyl cysteine" evidence="1">
    <location>
        <position position="1396"/>
    </location>
</feature>
<feature type="glycosylation site" description="N-linked (GlcNAc...) asparagine" evidence="4">
    <location>
        <position position="894"/>
    </location>
</feature>
<feature type="glycosylation site" description="N-linked (GlcNAc...) asparagine" evidence="4">
    <location>
        <position position="900"/>
    </location>
</feature>
<feature type="cross-link" description="Glycyl lysine isopeptide (Lys-Gly) (interchain with G-Cter in ubiquitin)" evidence="1">
    <location>
        <position position="688"/>
    </location>
</feature>
<name>CFTR_MACFA</name>
<protein>
    <recommendedName>
        <fullName evidence="1">Cystic fibrosis transmembrane conductance regulator</fullName>
        <shortName>CFTR</shortName>
    </recommendedName>
    <alternativeName>
        <fullName>ATP-binding cassette sub-family C member 7</fullName>
    </alternativeName>
    <alternativeName>
        <fullName>Channel conductance-controlling ATPase</fullName>
        <ecNumber evidence="1">5.6.1.6</ecNumber>
    </alternativeName>
    <alternativeName>
        <fullName>cAMP-dependent chloride channel</fullName>
    </alternativeName>
</protein>